<sequence>MTLQQQIIKVLGAKPQINAEEEIRRSIDFLKSYLQTYPFIKSLVLGISGGQDSTLAGKLCQMAINELRQETGNESLQFIAVRLPYGVQADEQDCQDAIAFIQPDRVLTVNIKGAVLASEQALREAGIELSDFVRGNEKARERMKAQYSIAGMTSGVVVGTDHAAEAITGFFTKYGDGGTDINPLYRLNKRQGKQLLAALGCPEHLYKKAPTADLEDDRPSLPDEVALGVTYDNIDDYLEGKNVPEQVARTIENWYLKTEHKRRPPITVFDDFWKK</sequence>
<evidence type="ECO:0000255" key="1">
    <source>
        <dbReference type="HAMAP-Rule" id="MF_00193"/>
    </source>
</evidence>
<reference key="1">
    <citation type="journal article" date="2006" name="Proc. Natl. Acad. Sci. U.S.A.">
        <title>Identification of genes subject to positive selection in uropathogenic strains of Escherichia coli: a comparative genomics approach.</title>
        <authorList>
            <person name="Chen S.L."/>
            <person name="Hung C.-S."/>
            <person name="Xu J."/>
            <person name="Reigstad C.S."/>
            <person name="Magrini V."/>
            <person name="Sabo A."/>
            <person name="Blasiar D."/>
            <person name="Bieri T."/>
            <person name="Meyer R.R."/>
            <person name="Ozersky P."/>
            <person name="Armstrong J.R."/>
            <person name="Fulton R.S."/>
            <person name="Latreille J.P."/>
            <person name="Spieth J."/>
            <person name="Hooton T.M."/>
            <person name="Mardis E.R."/>
            <person name="Hultgren S.J."/>
            <person name="Gordon J.I."/>
        </authorList>
    </citation>
    <scope>NUCLEOTIDE SEQUENCE [LARGE SCALE GENOMIC DNA]</scope>
    <source>
        <strain>UTI89 / UPEC</strain>
    </source>
</reference>
<organism>
    <name type="scientific">Escherichia coli (strain UTI89 / UPEC)</name>
    <dbReference type="NCBI Taxonomy" id="364106"/>
    <lineage>
        <taxon>Bacteria</taxon>
        <taxon>Pseudomonadati</taxon>
        <taxon>Pseudomonadota</taxon>
        <taxon>Gammaproteobacteria</taxon>
        <taxon>Enterobacterales</taxon>
        <taxon>Enterobacteriaceae</taxon>
        <taxon>Escherichia</taxon>
    </lineage>
</organism>
<comment type="function">
    <text evidence="1">Catalyzes the ATP-dependent amidation of deamido-NAD to form NAD. Uses ammonia as a nitrogen source.</text>
</comment>
<comment type="catalytic activity">
    <reaction evidence="1">
        <text>deamido-NAD(+) + NH4(+) + ATP = AMP + diphosphate + NAD(+) + H(+)</text>
        <dbReference type="Rhea" id="RHEA:21188"/>
        <dbReference type="ChEBI" id="CHEBI:15378"/>
        <dbReference type="ChEBI" id="CHEBI:28938"/>
        <dbReference type="ChEBI" id="CHEBI:30616"/>
        <dbReference type="ChEBI" id="CHEBI:33019"/>
        <dbReference type="ChEBI" id="CHEBI:57540"/>
        <dbReference type="ChEBI" id="CHEBI:58437"/>
        <dbReference type="ChEBI" id="CHEBI:456215"/>
        <dbReference type="EC" id="6.3.1.5"/>
    </reaction>
</comment>
<comment type="pathway">
    <text evidence="1">Cofactor biosynthesis; NAD(+) biosynthesis; NAD(+) from deamido-NAD(+) (ammonia route): step 1/1.</text>
</comment>
<comment type="subunit">
    <text evidence="1">Homodimer.</text>
</comment>
<comment type="similarity">
    <text evidence="1">Belongs to the NAD synthetase family.</text>
</comment>
<gene>
    <name evidence="1" type="primary">nadE</name>
    <name type="ordered locus">UTI89_C1934</name>
</gene>
<name>NADE_ECOUT</name>
<feature type="chain" id="PRO_1000077554" description="NH(3)-dependent NAD(+) synthetase">
    <location>
        <begin position="1"/>
        <end position="275"/>
    </location>
</feature>
<feature type="binding site" evidence="1">
    <location>
        <begin position="46"/>
        <end position="53"/>
    </location>
    <ligand>
        <name>ATP</name>
        <dbReference type="ChEBI" id="CHEBI:30616"/>
    </ligand>
</feature>
<feature type="binding site" evidence="1">
    <location>
        <position position="52"/>
    </location>
    <ligand>
        <name>Mg(2+)</name>
        <dbReference type="ChEBI" id="CHEBI:18420"/>
    </ligand>
</feature>
<feature type="binding site" evidence="1">
    <location>
        <position position="140"/>
    </location>
    <ligand>
        <name>deamido-NAD(+)</name>
        <dbReference type="ChEBI" id="CHEBI:58437"/>
    </ligand>
</feature>
<feature type="binding site" evidence="1">
    <location>
        <position position="160"/>
    </location>
    <ligand>
        <name>ATP</name>
        <dbReference type="ChEBI" id="CHEBI:30616"/>
    </ligand>
</feature>
<feature type="binding site" evidence="1">
    <location>
        <position position="165"/>
    </location>
    <ligand>
        <name>Mg(2+)</name>
        <dbReference type="ChEBI" id="CHEBI:18420"/>
    </ligand>
</feature>
<feature type="binding site" evidence="1">
    <location>
        <position position="173"/>
    </location>
    <ligand>
        <name>deamido-NAD(+)</name>
        <dbReference type="ChEBI" id="CHEBI:58437"/>
    </ligand>
</feature>
<feature type="binding site" evidence="1">
    <location>
        <position position="180"/>
    </location>
    <ligand>
        <name>deamido-NAD(+)</name>
        <dbReference type="ChEBI" id="CHEBI:58437"/>
    </ligand>
</feature>
<feature type="binding site" evidence="1">
    <location>
        <position position="189"/>
    </location>
    <ligand>
        <name>ATP</name>
        <dbReference type="ChEBI" id="CHEBI:30616"/>
    </ligand>
</feature>
<feature type="binding site" evidence="1">
    <location>
        <position position="211"/>
    </location>
    <ligand>
        <name>ATP</name>
        <dbReference type="ChEBI" id="CHEBI:30616"/>
    </ligand>
</feature>
<feature type="binding site" evidence="1">
    <location>
        <begin position="260"/>
        <end position="261"/>
    </location>
    <ligand>
        <name>deamido-NAD(+)</name>
        <dbReference type="ChEBI" id="CHEBI:58437"/>
    </ligand>
</feature>
<proteinExistence type="inferred from homology"/>
<dbReference type="EC" id="6.3.1.5" evidence="1"/>
<dbReference type="EMBL" id="CP000243">
    <property type="protein sequence ID" value="ABE07410.1"/>
    <property type="molecule type" value="Genomic_DNA"/>
</dbReference>
<dbReference type="RefSeq" id="WP_000175056.1">
    <property type="nucleotide sequence ID" value="NZ_CP064825.1"/>
</dbReference>
<dbReference type="SMR" id="Q1RB54"/>
<dbReference type="KEGG" id="eci:UTI89_C1934"/>
<dbReference type="HOGENOM" id="CLU_059327_3_0_6"/>
<dbReference type="UniPathway" id="UPA00253">
    <property type="reaction ID" value="UER00333"/>
</dbReference>
<dbReference type="Proteomes" id="UP000001952">
    <property type="component" value="Chromosome"/>
</dbReference>
<dbReference type="GO" id="GO:0005737">
    <property type="term" value="C:cytoplasm"/>
    <property type="evidence" value="ECO:0007669"/>
    <property type="project" value="InterPro"/>
</dbReference>
<dbReference type="GO" id="GO:0005524">
    <property type="term" value="F:ATP binding"/>
    <property type="evidence" value="ECO:0007669"/>
    <property type="project" value="UniProtKB-UniRule"/>
</dbReference>
<dbReference type="GO" id="GO:0004359">
    <property type="term" value="F:glutaminase activity"/>
    <property type="evidence" value="ECO:0007669"/>
    <property type="project" value="InterPro"/>
</dbReference>
<dbReference type="GO" id="GO:0046872">
    <property type="term" value="F:metal ion binding"/>
    <property type="evidence" value="ECO:0007669"/>
    <property type="project" value="UniProtKB-KW"/>
</dbReference>
<dbReference type="GO" id="GO:0003952">
    <property type="term" value="F:NAD+ synthase (glutamine-hydrolyzing) activity"/>
    <property type="evidence" value="ECO:0007669"/>
    <property type="project" value="InterPro"/>
</dbReference>
<dbReference type="GO" id="GO:0008795">
    <property type="term" value="F:NAD+ synthase activity"/>
    <property type="evidence" value="ECO:0007669"/>
    <property type="project" value="UniProtKB-UniRule"/>
</dbReference>
<dbReference type="GO" id="GO:0009435">
    <property type="term" value="P:NAD biosynthetic process"/>
    <property type="evidence" value="ECO:0007669"/>
    <property type="project" value="UniProtKB-UniRule"/>
</dbReference>
<dbReference type="CDD" id="cd00553">
    <property type="entry name" value="NAD_synthase"/>
    <property type="match status" value="1"/>
</dbReference>
<dbReference type="FunFam" id="3.40.50.620:FF:000015">
    <property type="entry name" value="NH(3)-dependent NAD(+) synthetase"/>
    <property type="match status" value="1"/>
</dbReference>
<dbReference type="Gene3D" id="3.40.50.620">
    <property type="entry name" value="HUPs"/>
    <property type="match status" value="1"/>
</dbReference>
<dbReference type="HAMAP" id="MF_00193">
    <property type="entry name" value="NadE_ammonia_dep"/>
    <property type="match status" value="1"/>
</dbReference>
<dbReference type="InterPro" id="IPR022310">
    <property type="entry name" value="NAD/GMP_synthase"/>
</dbReference>
<dbReference type="InterPro" id="IPR003694">
    <property type="entry name" value="NAD_synthase"/>
</dbReference>
<dbReference type="InterPro" id="IPR022926">
    <property type="entry name" value="NH(3)-dep_NAD(+)_synth"/>
</dbReference>
<dbReference type="InterPro" id="IPR014729">
    <property type="entry name" value="Rossmann-like_a/b/a_fold"/>
</dbReference>
<dbReference type="NCBIfam" id="TIGR00552">
    <property type="entry name" value="nadE"/>
    <property type="match status" value="1"/>
</dbReference>
<dbReference type="NCBIfam" id="NF001979">
    <property type="entry name" value="PRK00768.1"/>
    <property type="match status" value="1"/>
</dbReference>
<dbReference type="PANTHER" id="PTHR23090">
    <property type="entry name" value="NH 3 /GLUTAMINE-DEPENDENT NAD + SYNTHETASE"/>
    <property type="match status" value="1"/>
</dbReference>
<dbReference type="PANTHER" id="PTHR23090:SF7">
    <property type="entry name" value="NH(3)-DEPENDENT NAD(+) SYNTHETASE"/>
    <property type="match status" value="1"/>
</dbReference>
<dbReference type="Pfam" id="PF02540">
    <property type="entry name" value="NAD_synthase"/>
    <property type="match status" value="1"/>
</dbReference>
<dbReference type="SUPFAM" id="SSF52402">
    <property type="entry name" value="Adenine nucleotide alpha hydrolases-like"/>
    <property type="match status" value="1"/>
</dbReference>
<protein>
    <recommendedName>
        <fullName evidence="1">NH(3)-dependent NAD(+) synthetase</fullName>
        <ecNumber evidence="1">6.3.1.5</ecNumber>
    </recommendedName>
</protein>
<accession>Q1RB54</accession>
<keyword id="KW-0067">ATP-binding</keyword>
<keyword id="KW-0436">Ligase</keyword>
<keyword id="KW-0460">Magnesium</keyword>
<keyword id="KW-0479">Metal-binding</keyword>
<keyword id="KW-0520">NAD</keyword>
<keyword id="KW-0547">Nucleotide-binding</keyword>